<proteinExistence type="inferred from homology"/>
<organism>
    <name type="scientific">Bacillus cereus (strain ATCC 14579 / DSM 31 / CCUG 7414 / JCM 2152 / NBRC 15305 / NCIMB 9373 / NCTC 2599 / NRRL B-3711)</name>
    <dbReference type="NCBI Taxonomy" id="226900"/>
    <lineage>
        <taxon>Bacteria</taxon>
        <taxon>Bacillati</taxon>
        <taxon>Bacillota</taxon>
        <taxon>Bacilli</taxon>
        <taxon>Bacillales</taxon>
        <taxon>Bacillaceae</taxon>
        <taxon>Bacillus</taxon>
        <taxon>Bacillus cereus group</taxon>
    </lineage>
</organism>
<name>TRMD_BACCR</name>
<evidence type="ECO:0000255" key="1">
    <source>
        <dbReference type="HAMAP-Rule" id="MF_00605"/>
    </source>
</evidence>
<sequence>MKIDILTLFPDMFTGVFGSSILKKAQEKEAVNLRVVNFRDYTTSKHNSVDDYPYGGGAGMVLTPQPIFDAVEDLTKETERKPRVVLMCPQGERFTQKKAEELAGEEHLIFVCGHYEGYDERIREHLVTDEISIGDYVLTGGELASMVITDSVVRLLPGVLGNHASQVEDSFSTGLLEHPHYTRPADFRGMKVPDVLMSGNHKNIDEWRHKESLRRTYTRRPDLLDERELSKQEKKWLEEIKREQ</sequence>
<gene>
    <name evidence="1" type="primary">trmD</name>
    <name type="ordered locus">BC_3839</name>
</gene>
<protein>
    <recommendedName>
        <fullName evidence="1">tRNA (guanine-N(1)-)-methyltransferase</fullName>
        <ecNumber evidence="1">2.1.1.228</ecNumber>
    </recommendedName>
    <alternativeName>
        <fullName evidence="1">M1G-methyltransferase</fullName>
    </alternativeName>
    <alternativeName>
        <fullName evidence="1">tRNA [GM37] methyltransferase</fullName>
    </alternativeName>
</protein>
<keyword id="KW-0963">Cytoplasm</keyword>
<keyword id="KW-0489">Methyltransferase</keyword>
<keyword id="KW-1185">Reference proteome</keyword>
<keyword id="KW-0949">S-adenosyl-L-methionine</keyword>
<keyword id="KW-0808">Transferase</keyword>
<keyword id="KW-0819">tRNA processing</keyword>
<comment type="function">
    <text evidence="1">Specifically methylates guanosine-37 in various tRNAs.</text>
</comment>
<comment type="catalytic activity">
    <reaction evidence="1">
        <text>guanosine(37) in tRNA + S-adenosyl-L-methionine = N(1)-methylguanosine(37) in tRNA + S-adenosyl-L-homocysteine + H(+)</text>
        <dbReference type="Rhea" id="RHEA:36899"/>
        <dbReference type="Rhea" id="RHEA-COMP:10145"/>
        <dbReference type="Rhea" id="RHEA-COMP:10147"/>
        <dbReference type="ChEBI" id="CHEBI:15378"/>
        <dbReference type="ChEBI" id="CHEBI:57856"/>
        <dbReference type="ChEBI" id="CHEBI:59789"/>
        <dbReference type="ChEBI" id="CHEBI:73542"/>
        <dbReference type="ChEBI" id="CHEBI:74269"/>
        <dbReference type="EC" id="2.1.1.228"/>
    </reaction>
</comment>
<comment type="subunit">
    <text evidence="1">Homodimer.</text>
</comment>
<comment type="subcellular location">
    <subcellularLocation>
        <location evidence="1">Cytoplasm</location>
    </subcellularLocation>
</comment>
<comment type="similarity">
    <text evidence="1">Belongs to the RNA methyltransferase TrmD family.</text>
</comment>
<reference key="1">
    <citation type="journal article" date="2003" name="Nature">
        <title>Genome sequence of Bacillus cereus and comparative analysis with Bacillus anthracis.</title>
        <authorList>
            <person name="Ivanova N."/>
            <person name="Sorokin A."/>
            <person name="Anderson I."/>
            <person name="Galleron N."/>
            <person name="Candelon B."/>
            <person name="Kapatral V."/>
            <person name="Bhattacharyya A."/>
            <person name="Reznik G."/>
            <person name="Mikhailova N."/>
            <person name="Lapidus A."/>
            <person name="Chu L."/>
            <person name="Mazur M."/>
            <person name="Goltsman E."/>
            <person name="Larsen N."/>
            <person name="D'Souza M."/>
            <person name="Walunas T."/>
            <person name="Grechkin Y."/>
            <person name="Pusch G."/>
            <person name="Haselkorn R."/>
            <person name="Fonstein M."/>
            <person name="Ehrlich S.D."/>
            <person name="Overbeek R."/>
            <person name="Kyrpides N.C."/>
        </authorList>
    </citation>
    <scope>NUCLEOTIDE SEQUENCE [LARGE SCALE GENOMIC DNA]</scope>
    <source>
        <strain>ATCC 14579 / DSM 31 / CCUG 7414 / JCM 2152 / NBRC 15305 / NCIMB 9373 / NCTC 2599 / NRRL B-3711</strain>
    </source>
</reference>
<feature type="chain" id="PRO_0000060321" description="tRNA (guanine-N(1)-)-methyltransferase">
    <location>
        <begin position="1"/>
        <end position="244"/>
    </location>
</feature>
<feature type="binding site" evidence="1">
    <location>
        <position position="113"/>
    </location>
    <ligand>
        <name>S-adenosyl-L-methionine</name>
        <dbReference type="ChEBI" id="CHEBI:59789"/>
    </ligand>
</feature>
<feature type="binding site" evidence="1">
    <location>
        <begin position="133"/>
        <end position="138"/>
    </location>
    <ligand>
        <name>S-adenosyl-L-methionine</name>
        <dbReference type="ChEBI" id="CHEBI:59789"/>
    </ligand>
</feature>
<accession>Q812X2</accession>
<dbReference type="EC" id="2.1.1.228" evidence="1"/>
<dbReference type="EMBL" id="AE016877">
    <property type="protein sequence ID" value="AAP10761.1"/>
    <property type="molecule type" value="Genomic_DNA"/>
</dbReference>
<dbReference type="RefSeq" id="NP_833560.1">
    <property type="nucleotide sequence ID" value="NC_004722.1"/>
</dbReference>
<dbReference type="RefSeq" id="WP_000686903.1">
    <property type="nucleotide sequence ID" value="NZ_CP138336.1"/>
</dbReference>
<dbReference type="SMR" id="Q812X2"/>
<dbReference type="STRING" id="226900.BC_3839"/>
<dbReference type="KEGG" id="bce:BC3839"/>
<dbReference type="PATRIC" id="fig|226900.8.peg.3958"/>
<dbReference type="HOGENOM" id="CLU_047363_0_1_9"/>
<dbReference type="OrthoDB" id="9807416at2"/>
<dbReference type="Proteomes" id="UP000001417">
    <property type="component" value="Chromosome"/>
</dbReference>
<dbReference type="GO" id="GO:0005829">
    <property type="term" value="C:cytosol"/>
    <property type="evidence" value="ECO:0000318"/>
    <property type="project" value="GO_Central"/>
</dbReference>
<dbReference type="GO" id="GO:0052906">
    <property type="term" value="F:tRNA (guanine(37)-N1)-methyltransferase activity"/>
    <property type="evidence" value="ECO:0000318"/>
    <property type="project" value="GO_Central"/>
</dbReference>
<dbReference type="GO" id="GO:0002939">
    <property type="term" value="P:tRNA N1-guanine methylation"/>
    <property type="evidence" value="ECO:0000318"/>
    <property type="project" value="GO_Central"/>
</dbReference>
<dbReference type="CDD" id="cd18080">
    <property type="entry name" value="TrmD-like"/>
    <property type="match status" value="1"/>
</dbReference>
<dbReference type="FunFam" id="1.10.1270.20:FF:000001">
    <property type="entry name" value="tRNA (guanine-N(1)-)-methyltransferase"/>
    <property type="match status" value="1"/>
</dbReference>
<dbReference type="FunFam" id="3.40.1280.10:FF:000001">
    <property type="entry name" value="tRNA (guanine-N(1)-)-methyltransferase"/>
    <property type="match status" value="1"/>
</dbReference>
<dbReference type="Gene3D" id="3.40.1280.10">
    <property type="match status" value="1"/>
</dbReference>
<dbReference type="Gene3D" id="1.10.1270.20">
    <property type="entry name" value="tRNA(m1g37)methyltransferase, domain 2"/>
    <property type="match status" value="1"/>
</dbReference>
<dbReference type="HAMAP" id="MF_00605">
    <property type="entry name" value="TrmD"/>
    <property type="match status" value="1"/>
</dbReference>
<dbReference type="InterPro" id="IPR029028">
    <property type="entry name" value="Alpha/beta_knot_MTases"/>
</dbReference>
<dbReference type="InterPro" id="IPR023148">
    <property type="entry name" value="tRNA_m1G_MeTrfase_C_sf"/>
</dbReference>
<dbReference type="InterPro" id="IPR002649">
    <property type="entry name" value="tRNA_m1G_MeTrfase_TrmD"/>
</dbReference>
<dbReference type="InterPro" id="IPR029026">
    <property type="entry name" value="tRNA_m1G_MTases_N"/>
</dbReference>
<dbReference type="InterPro" id="IPR016009">
    <property type="entry name" value="tRNA_MeTrfase_TRMD/TRM10"/>
</dbReference>
<dbReference type="NCBIfam" id="NF000648">
    <property type="entry name" value="PRK00026.1"/>
    <property type="match status" value="1"/>
</dbReference>
<dbReference type="NCBIfam" id="TIGR00088">
    <property type="entry name" value="trmD"/>
    <property type="match status" value="1"/>
</dbReference>
<dbReference type="PANTHER" id="PTHR46417">
    <property type="entry name" value="TRNA (GUANINE-N(1)-)-METHYLTRANSFERASE"/>
    <property type="match status" value="1"/>
</dbReference>
<dbReference type="PANTHER" id="PTHR46417:SF1">
    <property type="entry name" value="TRNA (GUANINE-N(1)-)-METHYLTRANSFERASE"/>
    <property type="match status" value="1"/>
</dbReference>
<dbReference type="Pfam" id="PF01746">
    <property type="entry name" value="tRNA_m1G_MT"/>
    <property type="match status" value="1"/>
</dbReference>
<dbReference type="PIRSF" id="PIRSF000386">
    <property type="entry name" value="tRNA_mtase"/>
    <property type="match status" value="1"/>
</dbReference>
<dbReference type="SUPFAM" id="SSF75217">
    <property type="entry name" value="alpha/beta knot"/>
    <property type="match status" value="1"/>
</dbReference>